<accession>B1ZLX0</accession>
<sequence length="468" mass="51131">MAAANDYIVRDIGLADYGRKEISIAETEMPGLMATRAEYGASQPLKGAKIAGSLHMTIQTAVLIETLKHLGADIRWVSCNIYSTQDHAAAAIAAAGIPVFAVKGETLTEYWDYTSKLFDWHDGGMPNMILDDGGDATMFVHLGLRAENGDTAFLDKPESEEEEVFFALLKKKLAEKPKGWFAGLADSIKGVSEETTTGVHRLYNLAKEGKLLFPAINVNDSVTKSKFDNLYGCKESLVDGIRRGTDVMMAGKVAMVAGFGDVGKGSAASLRNAGCRVLVSEIDPICALQAAMEGYEVVTMEEAAPRADIFVTATGNKDIITIEHMRAMKDRAIVCNIGHFDNEIQVAGLKNLKWQNIKPQVDEIEFADGHRIILLSEGRLVNLGNATGHPSFVMSASFTNQTLAQIELWTNPGKYERQVYTLPKTLDEKVAALHLEKIGVKLSKLRPDQAAYIGVSQNGPFKPEHYRY</sequence>
<comment type="function">
    <text evidence="1">May play a key role in the regulation of the intracellular concentration of adenosylhomocysteine.</text>
</comment>
<comment type="catalytic activity">
    <reaction evidence="1">
        <text>S-adenosyl-L-homocysteine + H2O = L-homocysteine + adenosine</text>
        <dbReference type="Rhea" id="RHEA:21708"/>
        <dbReference type="ChEBI" id="CHEBI:15377"/>
        <dbReference type="ChEBI" id="CHEBI:16335"/>
        <dbReference type="ChEBI" id="CHEBI:57856"/>
        <dbReference type="ChEBI" id="CHEBI:58199"/>
        <dbReference type="EC" id="3.13.2.1"/>
    </reaction>
</comment>
<comment type="cofactor">
    <cofactor evidence="1">
        <name>NAD(+)</name>
        <dbReference type="ChEBI" id="CHEBI:57540"/>
    </cofactor>
    <text evidence="1">Binds 1 NAD(+) per subunit.</text>
</comment>
<comment type="pathway">
    <text evidence="1">Amino-acid biosynthesis; L-homocysteine biosynthesis; L-homocysteine from S-adenosyl-L-homocysteine: step 1/1.</text>
</comment>
<comment type="subcellular location">
    <subcellularLocation>
        <location evidence="1">Cytoplasm</location>
    </subcellularLocation>
</comment>
<comment type="similarity">
    <text evidence="1">Belongs to the adenosylhomocysteinase family.</text>
</comment>
<dbReference type="EC" id="3.13.2.1" evidence="1"/>
<dbReference type="EMBL" id="CP001029">
    <property type="protein sequence ID" value="ACB83039.1"/>
    <property type="molecule type" value="Genomic_DNA"/>
</dbReference>
<dbReference type="RefSeq" id="WP_012456637.1">
    <property type="nucleotide sequence ID" value="NC_010725.1"/>
</dbReference>
<dbReference type="SMR" id="B1ZLX0"/>
<dbReference type="STRING" id="441620.Mpop_4943"/>
<dbReference type="KEGG" id="mpo:Mpop_4943"/>
<dbReference type="eggNOG" id="COG0499">
    <property type="taxonomic scope" value="Bacteria"/>
</dbReference>
<dbReference type="HOGENOM" id="CLU_025194_2_1_5"/>
<dbReference type="OrthoDB" id="9802717at2"/>
<dbReference type="UniPathway" id="UPA00314">
    <property type="reaction ID" value="UER00076"/>
</dbReference>
<dbReference type="Proteomes" id="UP000007136">
    <property type="component" value="Chromosome"/>
</dbReference>
<dbReference type="GO" id="GO:0005829">
    <property type="term" value="C:cytosol"/>
    <property type="evidence" value="ECO:0007669"/>
    <property type="project" value="TreeGrafter"/>
</dbReference>
<dbReference type="GO" id="GO:0004013">
    <property type="term" value="F:adenosylhomocysteinase activity"/>
    <property type="evidence" value="ECO:0007669"/>
    <property type="project" value="UniProtKB-UniRule"/>
</dbReference>
<dbReference type="GO" id="GO:0071269">
    <property type="term" value="P:L-homocysteine biosynthetic process"/>
    <property type="evidence" value="ECO:0007669"/>
    <property type="project" value="UniProtKB-UniRule"/>
</dbReference>
<dbReference type="GO" id="GO:0006730">
    <property type="term" value="P:one-carbon metabolic process"/>
    <property type="evidence" value="ECO:0007669"/>
    <property type="project" value="UniProtKB-KW"/>
</dbReference>
<dbReference type="GO" id="GO:0033353">
    <property type="term" value="P:S-adenosylmethionine cycle"/>
    <property type="evidence" value="ECO:0007669"/>
    <property type="project" value="TreeGrafter"/>
</dbReference>
<dbReference type="CDD" id="cd00401">
    <property type="entry name" value="SAHH"/>
    <property type="match status" value="1"/>
</dbReference>
<dbReference type="FunFam" id="3.40.50.720:FF:000004">
    <property type="entry name" value="Adenosylhomocysteinase"/>
    <property type="match status" value="1"/>
</dbReference>
<dbReference type="Gene3D" id="3.40.50.1480">
    <property type="entry name" value="Adenosylhomocysteinase-like"/>
    <property type="match status" value="1"/>
</dbReference>
<dbReference type="Gene3D" id="3.40.50.720">
    <property type="entry name" value="NAD(P)-binding Rossmann-like Domain"/>
    <property type="match status" value="1"/>
</dbReference>
<dbReference type="HAMAP" id="MF_00563">
    <property type="entry name" value="AdoHcyase"/>
    <property type="match status" value="1"/>
</dbReference>
<dbReference type="InterPro" id="IPR042172">
    <property type="entry name" value="Adenosylhomocyst_ase-like_sf"/>
</dbReference>
<dbReference type="InterPro" id="IPR000043">
    <property type="entry name" value="Adenosylhomocysteinase-like"/>
</dbReference>
<dbReference type="InterPro" id="IPR015878">
    <property type="entry name" value="Ado_hCys_hydrolase_NAD-bd"/>
</dbReference>
<dbReference type="InterPro" id="IPR036291">
    <property type="entry name" value="NAD(P)-bd_dom_sf"/>
</dbReference>
<dbReference type="InterPro" id="IPR020082">
    <property type="entry name" value="S-Ado-L-homoCys_hydrolase_CS"/>
</dbReference>
<dbReference type="NCBIfam" id="TIGR00936">
    <property type="entry name" value="ahcY"/>
    <property type="match status" value="1"/>
</dbReference>
<dbReference type="NCBIfam" id="NF004005">
    <property type="entry name" value="PRK05476.2-3"/>
    <property type="match status" value="1"/>
</dbReference>
<dbReference type="PANTHER" id="PTHR23420">
    <property type="entry name" value="ADENOSYLHOMOCYSTEINASE"/>
    <property type="match status" value="1"/>
</dbReference>
<dbReference type="PANTHER" id="PTHR23420:SF0">
    <property type="entry name" value="ADENOSYLHOMOCYSTEINASE"/>
    <property type="match status" value="1"/>
</dbReference>
<dbReference type="Pfam" id="PF05221">
    <property type="entry name" value="AdoHcyase"/>
    <property type="match status" value="1"/>
</dbReference>
<dbReference type="Pfam" id="PF00670">
    <property type="entry name" value="AdoHcyase_NAD"/>
    <property type="match status" value="1"/>
</dbReference>
<dbReference type="PIRSF" id="PIRSF001109">
    <property type="entry name" value="Ad_hcy_hydrolase"/>
    <property type="match status" value="1"/>
</dbReference>
<dbReference type="SMART" id="SM00996">
    <property type="entry name" value="AdoHcyase"/>
    <property type="match status" value="1"/>
</dbReference>
<dbReference type="SMART" id="SM00997">
    <property type="entry name" value="AdoHcyase_NAD"/>
    <property type="match status" value="1"/>
</dbReference>
<dbReference type="SUPFAM" id="SSF52283">
    <property type="entry name" value="Formate/glycerate dehydrogenase catalytic domain-like"/>
    <property type="match status" value="1"/>
</dbReference>
<dbReference type="SUPFAM" id="SSF51735">
    <property type="entry name" value="NAD(P)-binding Rossmann-fold domains"/>
    <property type="match status" value="1"/>
</dbReference>
<dbReference type="PROSITE" id="PS00738">
    <property type="entry name" value="ADOHCYASE_1"/>
    <property type="match status" value="1"/>
</dbReference>
<dbReference type="PROSITE" id="PS00739">
    <property type="entry name" value="ADOHCYASE_2"/>
    <property type="match status" value="1"/>
</dbReference>
<name>SAHH_METPB</name>
<protein>
    <recommendedName>
        <fullName evidence="1">Adenosylhomocysteinase</fullName>
        <ecNumber evidence="1">3.13.2.1</ecNumber>
    </recommendedName>
    <alternativeName>
        <fullName evidence="1">S-adenosyl-L-homocysteine hydrolase</fullName>
        <shortName evidence="1">AdoHcyase</shortName>
    </alternativeName>
</protein>
<keyword id="KW-0963">Cytoplasm</keyword>
<keyword id="KW-0378">Hydrolase</keyword>
<keyword id="KW-0520">NAD</keyword>
<keyword id="KW-0554">One-carbon metabolism</keyword>
<reference key="1">
    <citation type="submission" date="2008-04" db="EMBL/GenBank/DDBJ databases">
        <title>Complete sequence of chromosome of Methylobacterium populi BJ001.</title>
        <authorList>
            <consortium name="US DOE Joint Genome Institute"/>
            <person name="Copeland A."/>
            <person name="Lucas S."/>
            <person name="Lapidus A."/>
            <person name="Glavina del Rio T."/>
            <person name="Dalin E."/>
            <person name="Tice H."/>
            <person name="Bruce D."/>
            <person name="Goodwin L."/>
            <person name="Pitluck S."/>
            <person name="Chertkov O."/>
            <person name="Brettin T."/>
            <person name="Detter J.C."/>
            <person name="Han C."/>
            <person name="Kuske C.R."/>
            <person name="Schmutz J."/>
            <person name="Larimer F."/>
            <person name="Land M."/>
            <person name="Hauser L."/>
            <person name="Kyrpides N."/>
            <person name="Mikhailova N."/>
            <person name="Marx C."/>
            <person name="Richardson P."/>
        </authorList>
    </citation>
    <scope>NUCLEOTIDE SEQUENCE [LARGE SCALE GENOMIC DNA]</scope>
    <source>
        <strain>ATCC BAA-705 / NCIMB 13946 / BJ001</strain>
    </source>
</reference>
<proteinExistence type="inferred from homology"/>
<feature type="chain" id="PRO_1000129288" description="Adenosylhomocysteinase">
    <location>
        <begin position="1"/>
        <end position="468"/>
    </location>
</feature>
<feature type="binding site" evidence="1">
    <location>
        <position position="57"/>
    </location>
    <ligand>
        <name>substrate</name>
    </ligand>
</feature>
<feature type="binding site" evidence="1">
    <location>
        <position position="132"/>
    </location>
    <ligand>
        <name>substrate</name>
    </ligand>
</feature>
<feature type="binding site" evidence="1">
    <location>
        <position position="194"/>
    </location>
    <ligand>
        <name>substrate</name>
    </ligand>
</feature>
<feature type="binding site" evidence="1">
    <location>
        <begin position="195"/>
        <end position="197"/>
    </location>
    <ligand>
        <name>NAD(+)</name>
        <dbReference type="ChEBI" id="CHEBI:57540"/>
    </ligand>
</feature>
<feature type="binding site" evidence="1">
    <location>
        <position position="224"/>
    </location>
    <ligand>
        <name>substrate</name>
    </ligand>
</feature>
<feature type="binding site" evidence="1">
    <location>
        <position position="228"/>
    </location>
    <ligand>
        <name>substrate</name>
    </ligand>
</feature>
<feature type="binding site" evidence="1">
    <location>
        <position position="229"/>
    </location>
    <ligand>
        <name>NAD(+)</name>
        <dbReference type="ChEBI" id="CHEBI:57540"/>
    </ligand>
</feature>
<feature type="binding site" evidence="1">
    <location>
        <begin position="258"/>
        <end position="263"/>
    </location>
    <ligand>
        <name>NAD(+)</name>
        <dbReference type="ChEBI" id="CHEBI:57540"/>
    </ligand>
</feature>
<feature type="binding site" evidence="1">
    <location>
        <position position="281"/>
    </location>
    <ligand>
        <name>NAD(+)</name>
        <dbReference type="ChEBI" id="CHEBI:57540"/>
    </ligand>
</feature>
<feature type="binding site" evidence="1">
    <location>
        <position position="316"/>
    </location>
    <ligand>
        <name>NAD(+)</name>
        <dbReference type="ChEBI" id="CHEBI:57540"/>
    </ligand>
</feature>
<feature type="binding site" evidence="1">
    <location>
        <begin position="337"/>
        <end position="339"/>
    </location>
    <ligand>
        <name>NAD(+)</name>
        <dbReference type="ChEBI" id="CHEBI:57540"/>
    </ligand>
</feature>
<feature type="binding site" evidence="1">
    <location>
        <position position="382"/>
    </location>
    <ligand>
        <name>NAD(+)</name>
        <dbReference type="ChEBI" id="CHEBI:57540"/>
    </ligand>
</feature>
<gene>
    <name evidence="1" type="primary">ahcY</name>
    <name type="ordered locus">Mpop_4943</name>
</gene>
<evidence type="ECO:0000255" key="1">
    <source>
        <dbReference type="HAMAP-Rule" id="MF_00563"/>
    </source>
</evidence>
<organism>
    <name type="scientific">Methylorubrum populi (strain ATCC BAA-705 / NCIMB 13946 / BJ001)</name>
    <name type="common">Methylobacterium populi</name>
    <dbReference type="NCBI Taxonomy" id="441620"/>
    <lineage>
        <taxon>Bacteria</taxon>
        <taxon>Pseudomonadati</taxon>
        <taxon>Pseudomonadota</taxon>
        <taxon>Alphaproteobacteria</taxon>
        <taxon>Hyphomicrobiales</taxon>
        <taxon>Methylobacteriaceae</taxon>
        <taxon>Methylorubrum</taxon>
    </lineage>
</organism>